<name>CARA_DESDA</name>
<feature type="chain" id="PRO_1000164698" description="Carbamoyl phosphate synthase small chain">
    <location>
        <begin position="1"/>
        <end position="376"/>
    </location>
</feature>
<feature type="domain" description="Glutamine amidotransferase type-1" evidence="1">
    <location>
        <begin position="191"/>
        <end position="376"/>
    </location>
</feature>
<feature type="region of interest" description="CPSase" evidence="1">
    <location>
        <begin position="1"/>
        <end position="187"/>
    </location>
</feature>
<feature type="active site" description="Nucleophile" evidence="1">
    <location>
        <position position="266"/>
    </location>
</feature>
<feature type="active site" evidence="1">
    <location>
        <position position="349"/>
    </location>
</feature>
<feature type="active site" evidence="1">
    <location>
        <position position="351"/>
    </location>
</feature>
<feature type="binding site" evidence="1">
    <location>
        <position position="45"/>
    </location>
    <ligand>
        <name>L-glutamine</name>
        <dbReference type="ChEBI" id="CHEBI:58359"/>
    </ligand>
</feature>
<feature type="binding site" evidence="1">
    <location>
        <position position="239"/>
    </location>
    <ligand>
        <name>L-glutamine</name>
        <dbReference type="ChEBI" id="CHEBI:58359"/>
    </ligand>
</feature>
<feature type="binding site" evidence="1">
    <location>
        <position position="241"/>
    </location>
    <ligand>
        <name>L-glutamine</name>
        <dbReference type="ChEBI" id="CHEBI:58359"/>
    </ligand>
</feature>
<feature type="binding site" evidence="1">
    <location>
        <position position="267"/>
    </location>
    <ligand>
        <name>L-glutamine</name>
        <dbReference type="ChEBI" id="CHEBI:58359"/>
    </ligand>
</feature>
<feature type="binding site" evidence="1">
    <location>
        <position position="270"/>
    </location>
    <ligand>
        <name>L-glutamine</name>
        <dbReference type="ChEBI" id="CHEBI:58359"/>
    </ligand>
</feature>
<feature type="binding site" evidence="1">
    <location>
        <position position="308"/>
    </location>
    <ligand>
        <name>L-glutamine</name>
        <dbReference type="ChEBI" id="CHEBI:58359"/>
    </ligand>
</feature>
<feature type="binding site" evidence="1">
    <location>
        <position position="310"/>
    </location>
    <ligand>
        <name>L-glutamine</name>
        <dbReference type="ChEBI" id="CHEBI:58359"/>
    </ligand>
</feature>
<feature type="binding site" evidence="1">
    <location>
        <position position="311"/>
    </location>
    <ligand>
        <name>L-glutamine</name>
        <dbReference type="ChEBI" id="CHEBI:58359"/>
    </ligand>
</feature>
<gene>
    <name evidence="1" type="primary">carA</name>
    <name type="ordered locus">Ddes_1097</name>
</gene>
<organism>
    <name type="scientific">Desulfovibrio desulfuricans (strain ATCC 27774 / DSM 6949 / MB)</name>
    <dbReference type="NCBI Taxonomy" id="525146"/>
    <lineage>
        <taxon>Bacteria</taxon>
        <taxon>Pseudomonadati</taxon>
        <taxon>Thermodesulfobacteriota</taxon>
        <taxon>Desulfovibrionia</taxon>
        <taxon>Desulfovibrionales</taxon>
        <taxon>Desulfovibrionaceae</taxon>
        <taxon>Desulfovibrio</taxon>
    </lineage>
</organism>
<comment type="function">
    <text evidence="1">Small subunit of the glutamine-dependent carbamoyl phosphate synthetase (CPSase). CPSase catalyzes the formation of carbamoyl phosphate from the ammonia moiety of glutamine, carbonate, and phosphate donated by ATP, constituting the first step of 2 biosynthetic pathways, one leading to arginine and/or urea and the other to pyrimidine nucleotides. The small subunit (glutamine amidotransferase) binds and cleaves glutamine to supply the large subunit with the substrate ammonia.</text>
</comment>
<comment type="catalytic activity">
    <reaction evidence="1">
        <text>hydrogencarbonate + L-glutamine + 2 ATP + H2O = carbamoyl phosphate + L-glutamate + 2 ADP + phosphate + 2 H(+)</text>
        <dbReference type="Rhea" id="RHEA:18633"/>
        <dbReference type="ChEBI" id="CHEBI:15377"/>
        <dbReference type="ChEBI" id="CHEBI:15378"/>
        <dbReference type="ChEBI" id="CHEBI:17544"/>
        <dbReference type="ChEBI" id="CHEBI:29985"/>
        <dbReference type="ChEBI" id="CHEBI:30616"/>
        <dbReference type="ChEBI" id="CHEBI:43474"/>
        <dbReference type="ChEBI" id="CHEBI:58228"/>
        <dbReference type="ChEBI" id="CHEBI:58359"/>
        <dbReference type="ChEBI" id="CHEBI:456216"/>
        <dbReference type="EC" id="6.3.5.5"/>
    </reaction>
</comment>
<comment type="catalytic activity">
    <molecule>Carbamoyl phosphate synthase small chain</molecule>
    <reaction evidence="1">
        <text>L-glutamine + H2O = L-glutamate + NH4(+)</text>
        <dbReference type="Rhea" id="RHEA:15889"/>
        <dbReference type="ChEBI" id="CHEBI:15377"/>
        <dbReference type="ChEBI" id="CHEBI:28938"/>
        <dbReference type="ChEBI" id="CHEBI:29985"/>
        <dbReference type="ChEBI" id="CHEBI:58359"/>
    </reaction>
</comment>
<comment type="pathway">
    <text evidence="1">Amino-acid biosynthesis; L-arginine biosynthesis; carbamoyl phosphate from bicarbonate: step 1/1.</text>
</comment>
<comment type="pathway">
    <text evidence="1">Pyrimidine metabolism; UMP biosynthesis via de novo pathway; (S)-dihydroorotate from bicarbonate: step 1/3.</text>
</comment>
<comment type="subunit">
    <text evidence="1">Composed of two chains; the small (or glutamine) chain promotes the hydrolysis of glutamine to ammonia, which is used by the large (or ammonia) chain to synthesize carbamoyl phosphate. Tetramer of heterodimers (alpha,beta)4.</text>
</comment>
<comment type="similarity">
    <text evidence="1">Belongs to the CarA family.</text>
</comment>
<accession>B8IZS6</accession>
<keyword id="KW-0028">Amino-acid biosynthesis</keyword>
<keyword id="KW-0055">Arginine biosynthesis</keyword>
<keyword id="KW-0067">ATP-binding</keyword>
<keyword id="KW-0315">Glutamine amidotransferase</keyword>
<keyword id="KW-0436">Ligase</keyword>
<keyword id="KW-0547">Nucleotide-binding</keyword>
<keyword id="KW-0665">Pyrimidine biosynthesis</keyword>
<reference key="1">
    <citation type="submission" date="2009-01" db="EMBL/GenBank/DDBJ databases">
        <title>Complete sequence of Desulfovibrio desulfuricans subsp. desulfuricans str. ATCC 27774.</title>
        <authorList>
            <consortium name="US DOE Joint Genome Institute"/>
            <person name="Lucas S."/>
            <person name="Copeland A."/>
            <person name="Lapidus A."/>
            <person name="Glavina del Rio T."/>
            <person name="Tice H."/>
            <person name="Bruce D."/>
            <person name="Goodwin L."/>
            <person name="Pitluck S."/>
            <person name="Sims D."/>
            <person name="Lu M."/>
            <person name="Kiss H."/>
            <person name="Meineke L."/>
            <person name="Brettin T."/>
            <person name="Detter J.C."/>
            <person name="Han C."/>
            <person name="Larimer F."/>
            <person name="Land M."/>
            <person name="Hauser L."/>
            <person name="Kyrpides N."/>
            <person name="Ovchinnikova G."/>
            <person name="Hazen T.C."/>
        </authorList>
    </citation>
    <scope>NUCLEOTIDE SEQUENCE [LARGE SCALE GENOMIC DNA]</scope>
    <source>
        <strain>ATCC 27774 / DSM 6949 / MB</strain>
    </source>
</reference>
<proteinExistence type="inferred from homology"/>
<dbReference type="EC" id="6.3.5.5" evidence="1"/>
<dbReference type="EMBL" id="CP001358">
    <property type="protein sequence ID" value="ACL49003.1"/>
    <property type="molecule type" value="Genomic_DNA"/>
</dbReference>
<dbReference type="SMR" id="B8IZS6"/>
<dbReference type="STRING" id="525146.Ddes_1097"/>
<dbReference type="KEGG" id="dds:Ddes_1097"/>
<dbReference type="eggNOG" id="COG0505">
    <property type="taxonomic scope" value="Bacteria"/>
</dbReference>
<dbReference type="HOGENOM" id="CLU_035901_2_1_7"/>
<dbReference type="UniPathway" id="UPA00068">
    <property type="reaction ID" value="UER00171"/>
</dbReference>
<dbReference type="UniPathway" id="UPA00070">
    <property type="reaction ID" value="UER00115"/>
</dbReference>
<dbReference type="GO" id="GO:0005524">
    <property type="term" value="F:ATP binding"/>
    <property type="evidence" value="ECO:0007669"/>
    <property type="project" value="UniProtKB-UniRule"/>
</dbReference>
<dbReference type="GO" id="GO:0004088">
    <property type="term" value="F:carbamoyl-phosphate synthase (glutamine-hydrolyzing) activity"/>
    <property type="evidence" value="ECO:0007669"/>
    <property type="project" value="UniProtKB-UniRule"/>
</dbReference>
<dbReference type="GO" id="GO:0004359">
    <property type="term" value="F:glutaminase activity"/>
    <property type="evidence" value="ECO:0007669"/>
    <property type="project" value="RHEA"/>
</dbReference>
<dbReference type="GO" id="GO:0006207">
    <property type="term" value="P:'de novo' pyrimidine nucleobase biosynthetic process"/>
    <property type="evidence" value="ECO:0007669"/>
    <property type="project" value="InterPro"/>
</dbReference>
<dbReference type="GO" id="GO:0044205">
    <property type="term" value="P:'de novo' UMP biosynthetic process"/>
    <property type="evidence" value="ECO:0007669"/>
    <property type="project" value="UniProtKB-UniRule"/>
</dbReference>
<dbReference type="GO" id="GO:0006541">
    <property type="term" value="P:glutamine metabolic process"/>
    <property type="evidence" value="ECO:0007669"/>
    <property type="project" value="InterPro"/>
</dbReference>
<dbReference type="GO" id="GO:0006526">
    <property type="term" value="P:L-arginine biosynthetic process"/>
    <property type="evidence" value="ECO:0007669"/>
    <property type="project" value="UniProtKB-UniRule"/>
</dbReference>
<dbReference type="CDD" id="cd01744">
    <property type="entry name" value="GATase1_CPSase"/>
    <property type="match status" value="1"/>
</dbReference>
<dbReference type="FunFam" id="3.50.30.20:FF:000001">
    <property type="entry name" value="Carbamoyl-phosphate synthase small chain"/>
    <property type="match status" value="1"/>
</dbReference>
<dbReference type="Gene3D" id="3.40.50.880">
    <property type="match status" value="1"/>
</dbReference>
<dbReference type="Gene3D" id="3.50.30.20">
    <property type="entry name" value="Carbamoyl-phosphate synthase small subunit, N-terminal domain"/>
    <property type="match status" value="1"/>
</dbReference>
<dbReference type="HAMAP" id="MF_01209">
    <property type="entry name" value="CPSase_S_chain"/>
    <property type="match status" value="1"/>
</dbReference>
<dbReference type="InterPro" id="IPR050472">
    <property type="entry name" value="Anth_synth/Amidotransfase"/>
</dbReference>
<dbReference type="InterPro" id="IPR006274">
    <property type="entry name" value="CarbamoylP_synth_ssu"/>
</dbReference>
<dbReference type="InterPro" id="IPR002474">
    <property type="entry name" value="CarbamoylP_synth_ssu_N"/>
</dbReference>
<dbReference type="InterPro" id="IPR036480">
    <property type="entry name" value="CarbP_synth_ssu_N_sf"/>
</dbReference>
<dbReference type="InterPro" id="IPR029062">
    <property type="entry name" value="Class_I_gatase-like"/>
</dbReference>
<dbReference type="InterPro" id="IPR035686">
    <property type="entry name" value="CPSase_GATase1"/>
</dbReference>
<dbReference type="InterPro" id="IPR017926">
    <property type="entry name" value="GATASE"/>
</dbReference>
<dbReference type="NCBIfam" id="TIGR01368">
    <property type="entry name" value="CPSaseIIsmall"/>
    <property type="match status" value="1"/>
</dbReference>
<dbReference type="NCBIfam" id="NF009475">
    <property type="entry name" value="PRK12838.1"/>
    <property type="match status" value="1"/>
</dbReference>
<dbReference type="PANTHER" id="PTHR43418:SF7">
    <property type="entry name" value="CARBAMOYL-PHOSPHATE SYNTHASE SMALL CHAIN"/>
    <property type="match status" value="1"/>
</dbReference>
<dbReference type="PANTHER" id="PTHR43418">
    <property type="entry name" value="MULTIFUNCTIONAL TRYPTOPHAN BIOSYNTHESIS PROTEIN-RELATED"/>
    <property type="match status" value="1"/>
</dbReference>
<dbReference type="Pfam" id="PF00988">
    <property type="entry name" value="CPSase_sm_chain"/>
    <property type="match status" value="1"/>
</dbReference>
<dbReference type="Pfam" id="PF00117">
    <property type="entry name" value="GATase"/>
    <property type="match status" value="1"/>
</dbReference>
<dbReference type="PRINTS" id="PR00097">
    <property type="entry name" value="ANTSNTHASEII"/>
</dbReference>
<dbReference type="PRINTS" id="PR00099">
    <property type="entry name" value="CPSGATASE"/>
</dbReference>
<dbReference type="PRINTS" id="PR00096">
    <property type="entry name" value="GATASE"/>
</dbReference>
<dbReference type="SMART" id="SM01097">
    <property type="entry name" value="CPSase_sm_chain"/>
    <property type="match status" value="1"/>
</dbReference>
<dbReference type="SUPFAM" id="SSF52021">
    <property type="entry name" value="Carbamoyl phosphate synthetase, small subunit N-terminal domain"/>
    <property type="match status" value="1"/>
</dbReference>
<dbReference type="SUPFAM" id="SSF52317">
    <property type="entry name" value="Class I glutamine amidotransferase-like"/>
    <property type="match status" value="1"/>
</dbReference>
<dbReference type="PROSITE" id="PS51273">
    <property type="entry name" value="GATASE_TYPE_1"/>
    <property type="match status" value="1"/>
</dbReference>
<evidence type="ECO:0000255" key="1">
    <source>
        <dbReference type="HAMAP-Rule" id="MF_01209"/>
    </source>
</evidence>
<sequence length="376" mass="41240">MKALLVLEDGFTLEGKSFTGDFETGGEVIFTTGMTGYQEILTDPSYYGQMVCMTYPLIGNYGTCREDMESAGVHCAALLVKECCKKPSNWRSTMSLPEFMKRYEKPGVEGLDTRALTRHLRMNGAMRGIISTRETDPAVLQERARALPAMKGHNLVPFVAPEKPYAWYDNAVQEVTVAEDGSYAWRGTGLPLLVYDFGIKWNILRRLCEAGFEPLAVPPGFSPARAKASGAKGVFLSNGPGDPATLTSEIALVRELIHMLPVTGICLGHQLIGHALGARTEKLKFGHHGCNHPVKDLTTGRIEISSQNHGFHVVLDDVDDVEATHVNLNDQTLEGLRHKTLPVMSLQYHPEAAAGPHDGEYLFNRFRKIIGESAGA</sequence>
<protein>
    <recommendedName>
        <fullName evidence="1">Carbamoyl phosphate synthase small chain</fullName>
        <ecNumber evidence="1">6.3.5.5</ecNumber>
    </recommendedName>
    <alternativeName>
        <fullName evidence="1">Carbamoyl phosphate synthetase glutamine chain</fullName>
    </alternativeName>
</protein>